<dbReference type="SMR" id="P0DPX5"/>
<dbReference type="GO" id="GO:0005576">
    <property type="term" value="C:extracellular region"/>
    <property type="evidence" value="ECO:0007669"/>
    <property type="project" value="UniProtKB-SubCell"/>
</dbReference>
<dbReference type="GO" id="GO:0090729">
    <property type="term" value="F:toxin activity"/>
    <property type="evidence" value="ECO:0007669"/>
    <property type="project" value="UniProtKB-KW"/>
</dbReference>
<dbReference type="InterPro" id="IPR045860">
    <property type="entry name" value="Snake_toxin-like_sf"/>
</dbReference>
<dbReference type="Pfam" id="PF16975">
    <property type="entry name" value="UPAR_LY6_2"/>
    <property type="match status" value="1"/>
</dbReference>
<dbReference type="SUPFAM" id="SSF57302">
    <property type="entry name" value="Snake toxin-like"/>
    <property type="match status" value="1"/>
</dbReference>
<organism>
    <name type="scientific">Scolopendra alternans</name>
    <name type="common">Florida Keys giant centipede</name>
    <dbReference type="NCBI Taxonomy" id="1329349"/>
    <lineage>
        <taxon>Eukaryota</taxon>
        <taxon>Metazoa</taxon>
        <taxon>Ecdysozoa</taxon>
        <taxon>Arthropoda</taxon>
        <taxon>Myriapoda</taxon>
        <taxon>Chilopoda</taxon>
        <taxon>Pleurostigmophora</taxon>
        <taxon>Scolopendromorpha</taxon>
        <taxon>Scolopendridae</taxon>
        <taxon>Scolopendra</taxon>
    </lineage>
</organism>
<comment type="subcellular location">
    <subcellularLocation>
        <location evidence="4">Secreted</location>
    </subcellularLocation>
</comment>
<comment type="tissue specificity">
    <text evidence="4">Expressed by the venom gland.</text>
</comment>
<comment type="PTM">
    <text evidence="3">Contains 5 disulfide bonds.</text>
</comment>
<comment type="miscellaneous">
    <text evidence="3">The scoloptoxin-05 family has remarkable similarities with the three-finger toxin family commonly found in snakes.</text>
</comment>
<comment type="similarity">
    <text evidence="3">Belongs to the scoloptoxin-05 family.</text>
</comment>
<comment type="online information" name="National Center for Biotechnology Information (NCBI)">
    <link uri="https://www.ncbi.nlm.nih.gov/nuccore/GASK01000050"/>
</comment>
<reference key="1">
    <citation type="journal article" date="2014" name="Mol. Biol. Evol.">
        <title>Clawing through evolution: toxin diversification and convergence in the ancient lineage Chilopoda (centipedes).</title>
        <authorList>
            <person name="Undheim E.A."/>
            <person name="Jones A."/>
            <person name="Clauser K.R."/>
            <person name="Holland J.W."/>
            <person name="Pineda S.S."/>
            <person name="King G.F."/>
            <person name="Fry B.G."/>
        </authorList>
    </citation>
    <scope>NUCLEOTIDE SEQUENCE [MRNA]</scope>
    <scope>NOMENCLATURE</scope>
    <source>
        <tissue>Venom gland</tissue>
    </source>
</reference>
<accession>P0DPX5</accession>
<name>TX51A_SCOAL</name>
<proteinExistence type="evidence at transcript level"/>
<evidence type="ECO:0000255" key="1"/>
<evidence type="ECO:0000303" key="2">
    <source>
    </source>
</evidence>
<evidence type="ECO:0000305" key="3"/>
<evidence type="ECO:0000305" key="4">
    <source>
    </source>
</evidence>
<feature type="signal peptide" evidence="1">
    <location>
        <begin position="1"/>
        <end position="24"/>
    </location>
</feature>
<feature type="chain" id="PRO_0000446720" description="U-scoloptoxin(05)-Sa1a" evidence="3">
    <location>
        <begin position="25"/>
        <end position="133"/>
    </location>
</feature>
<protein>
    <recommendedName>
        <fullName evidence="2">U-scoloptoxin(05)-Sa1a</fullName>
        <shortName evidence="2">U-SLPTX(05)-Sa1a</shortName>
    </recommendedName>
</protein>
<keyword id="KW-1015">Disulfide bond</keyword>
<keyword id="KW-0964">Secreted</keyword>
<keyword id="KW-0732">Signal</keyword>
<keyword id="KW-0800">Toxin</keyword>
<sequence length="133" mass="14648">MPSLCIIALFGTLTFYTLIPSIHTLKCVICDSPMGNYDCKTTYPAATECPGSSNNYCYKRETFASNGNLDQIRRNCNPVAASSKACKDLENGAKICEYSCNTDGCNSVAGMEPTRAVYFIAILMLTFYTFIRL</sequence>